<reference key="1">
    <citation type="journal article" date="2006" name="Genome Biol.">
        <title>The genome of Rhizobium leguminosarum has recognizable core and accessory components.</title>
        <authorList>
            <person name="Young J.P.W."/>
            <person name="Crossman L.C."/>
            <person name="Johnston A.W.B."/>
            <person name="Thomson N.R."/>
            <person name="Ghazoui Z.F."/>
            <person name="Hull K.H."/>
            <person name="Wexler M."/>
            <person name="Curson A.R.J."/>
            <person name="Todd J.D."/>
            <person name="Poole P.S."/>
            <person name="Mauchline T.H."/>
            <person name="East A.K."/>
            <person name="Quail M.A."/>
            <person name="Churcher C."/>
            <person name="Arrowsmith C."/>
            <person name="Cherevach I."/>
            <person name="Chillingworth T."/>
            <person name="Clarke K."/>
            <person name="Cronin A."/>
            <person name="Davis P."/>
            <person name="Fraser A."/>
            <person name="Hance Z."/>
            <person name="Hauser H."/>
            <person name="Jagels K."/>
            <person name="Moule S."/>
            <person name="Mungall K."/>
            <person name="Norbertczak H."/>
            <person name="Rabbinowitsch E."/>
            <person name="Sanders M."/>
            <person name="Simmonds M."/>
            <person name="Whitehead S."/>
            <person name="Parkhill J."/>
        </authorList>
    </citation>
    <scope>NUCLEOTIDE SEQUENCE [LARGE SCALE GENOMIC DNA]</scope>
    <source>
        <strain>DSM 114642 / LMG 32736 / 3841</strain>
    </source>
</reference>
<comment type="function">
    <text evidence="1">Catalyzes the conversion of heme O to heme A by two successive hydroxylations of the methyl group at C8. The first hydroxylation forms heme I, the second hydroxylation results in an unstable dihydroxymethyl group, which spontaneously dehydrates, resulting in the formyl group of heme A.</text>
</comment>
<comment type="catalytic activity">
    <reaction evidence="1">
        <text>Fe(II)-heme o + 2 A + H2O = Fe(II)-heme a + 2 AH2</text>
        <dbReference type="Rhea" id="RHEA:63388"/>
        <dbReference type="ChEBI" id="CHEBI:13193"/>
        <dbReference type="ChEBI" id="CHEBI:15377"/>
        <dbReference type="ChEBI" id="CHEBI:17499"/>
        <dbReference type="ChEBI" id="CHEBI:60530"/>
        <dbReference type="ChEBI" id="CHEBI:61715"/>
        <dbReference type="EC" id="1.17.99.9"/>
    </reaction>
    <physiologicalReaction direction="left-to-right" evidence="1">
        <dbReference type="Rhea" id="RHEA:63389"/>
    </physiologicalReaction>
</comment>
<comment type="cofactor">
    <cofactor evidence="1">
        <name>heme b</name>
        <dbReference type="ChEBI" id="CHEBI:60344"/>
    </cofactor>
</comment>
<comment type="pathway">
    <text evidence="1">Porphyrin-containing compound metabolism; heme A biosynthesis; heme A from heme O: step 1/1.</text>
</comment>
<comment type="subunit">
    <text evidence="1">Interacts with CtaB.</text>
</comment>
<comment type="subcellular location">
    <subcellularLocation>
        <location evidence="1">Cell membrane</location>
        <topology evidence="1">Multi-pass membrane protein</topology>
    </subcellularLocation>
</comment>
<comment type="similarity">
    <text evidence="1">Belongs to the COX15/CtaA family. Type 2 subfamily.</text>
</comment>
<evidence type="ECO:0000255" key="1">
    <source>
        <dbReference type="HAMAP-Rule" id="MF_01665"/>
    </source>
</evidence>
<organism>
    <name type="scientific">Rhizobium johnstonii (strain DSM 114642 / LMG 32736 / 3841)</name>
    <name type="common">Rhizobium leguminosarum bv. viciae</name>
    <dbReference type="NCBI Taxonomy" id="216596"/>
    <lineage>
        <taxon>Bacteria</taxon>
        <taxon>Pseudomonadati</taxon>
        <taxon>Pseudomonadota</taxon>
        <taxon>Alphaproteobacteria</taxon>
        <taxon>Hyphomicrobiales</taxon>
        <taxon>Rhizobiaceae</taxon>
        <taxon>Rhizobium/Agrobacterium group</taxon>
        <taxon>Rhizobium</taxon>
        <taxon>Rhizobium johnstonii</taxon>
    </lineage>
</organism>
<feature type="chain" id="PRO_0000349061" description="Heme A synthase">
    <location>
        <begin position="1"/>
        <end position="367"/>
    </location>
</feature>
<feature type="transmembrane region" description="Helical" evidence="1">
    <location>
        <begin position="25"/>
        <end position="45"/>
    </location>
</feature>
<feature type="transmembrane region" description="Helical" evidence="1">
    <location>
        <begin position="111"/>
        <end position="131"/>
    </location>
</feature>
<feature type="transmembrane region" description="Helical" evidence="1">
    <location>
        <begin position="139"/>
        <end position="159"/>
    </location>
</feature>
<feature type="transmembrane region" description="Helical" evidence="1">
    <location>
        <begin position="174"/>
        <end position="194"/>
    </location>
</feature>
<feature type="transmembrane region" description="Helical" evidence="1">
    <location>
        <begin position="210"/>
        <end position="230"/>
    </location>
</feature>
<feature type="transmembrane region" description="Helical" evidence="1">
    <location>
        <begin position="276"/>
        <end position="296"/>
    </location>
</feature>
<feature type="transmembrane region" description="Helical" evidence="1">
    <location>
        <begin position="305"/>
        <end position="325"/>
    </location>
</feature>
<feature type="transmembrane region" description="Helical" evidence="1">
    <location>
        <begin position="327"/>
        <end position="347"/>
    </location>
</feature>
<feature type="binding site" description="axial binding residue" evidence="1">
    <location>
        <position position="274"/>
    </location>
    <ligand>
        <name>heme</name>
        <dbReference type="ChEBI" id="CHEBI:30413"/>
    </ligand>
    <ligandPart>
        <name>Fe</name>
        <dbReference type="ChEBI" id="CHEBI:18248"/>
    </ligandPart>
</feature>
<feature type="binding site" description="axial binding residue" evidence="1">
    <location>
        <position position="335"/>
    </location>
    <ligand>
        <name>heme</name>
        <dbReference type="ChEBI" id="CHEBI:30413"/>
    </ligand>
    <ligandPart>
        <name>Fe</name>
        <dbReference type="ChEBI" id="CHEBI:18248"/>
    </ligandPart>
</feature>
<keyword id="KW-1003">Cell membrane</keyword>
<keyword id="KW-0350">Heme biosynthesis</keyword>
<keyword id="KW-0408">Iron</keyword>
<keyword id="KW-0472">Membrane</keyword>
<keyword id="KW-0479">Metal-binding</keyword>
<keyword id="KW-0560">Oxidoreductase</keyword>
<keyword id="KW-0812">Transmembrane</keyword>
<keyword id="KW-1133">Transmembrane helix</keyword>
<accession>Q1MIP9</accession>
<dbReference type="EC" id="1.17.99.9" evidence="1"/>
<dbReference type="EMBL" id="AM236080">
    <property type="protein sequence ID" value="CAK07161.1"/>
    <property type="molecule type" value="Genomic_DNA"/>
</dbReference>
<dbReference type="RefSeq" id="WP_011651341.1">
    <property type="nucleotide sequence ID" value="NC_008380.1"/>
</dbReference>
<dbReference type="SMR" id="Q1MIP9"/>
<dbReference type="EnsemblBacteria" id="CAK07161">
    <property type="protein sequence ID" value="CAK07161"/>
    <property type="gene ID" value="RL1666"/>
</dbReference>
<dbReference type="KEGG" id="rle:RL1666"/>
<dbReference type="eggNOG" id="COG1612">
    <property type="taxonomic scope" value="Bacteria"/>
</dbReference>
<dbReference type="HOGENOM" id="CLU_017627_0_0_5"/>
<dbReference type="UniPathway" id="UPA00269">
    <property type="reaction ID" value="UER00713"/>
</dbReference>
<dbReference type="Proteomes" id="UP000006575">
    <property type="component" value="Chromosome"/>
</dbReference>
<dbReference type="GO" id="GO:0005886">
    <property type="term" value="C:plasma membrane"/>
    <property type="evidence" value="ECO:0007669"/>
    <property type="project" value="UniProtKB-SubCell"/>
</dbReference>
<dbReference type="GO" id="GO:0046872">
    <property type="term" value="F:metal ion binding"/>
    <property type="evidence" value="ECO:0007669"/>
    <property type="project" value="UniProtKB-KW"/>
</dbReference>
<dbReference type="GO" id="GO:0016653">
    <property type="term" value="F:oxidoreductase activity, acting on NAD(P)H, heme protein as acceptor"/>
    <property type="evidence" value="ECO:0007669"/>
    <property type="project" value="InterPro"/>
</dbReference>
<dbReference type="GO" id="GO:0006784">
    <property type="term" value="P:heme A biosynthetic process"/>
    <property type="evidence" value="ECO:0007669"/>
    <property type="project" value="UniProtKB-UniRule"/>
</dbReference>
<dbReference type="HAMAP" id="MF_01665">
    <property type="entry name" value="HemeA_synth_type2"/>
    <property type="match status" value="1"/>
</dbReference>
<dbReference type="InterPro" id="IPR003780">
    <property type="entry name" value="COX15/CtaA_fam"/>
</dbReference>
<dbReference type="InterPro" id="IPR023754">
    <property type="entry name" value="HemeA_Synthase_type2"/>
</dbReference>
<dbReference type="PANTHER" id="PTHR23289">
    <property type="entry name" value="CYTOCHROME C OXIDASE ASSEMBLY PROTEIN COX15"/>
    <property type="match status" value="1"/>
</dbReference>
<dbReference type="PANTHER" id="PTHR23289:SF2">
    <property type="entry name" value="CYTOCHROME C OXIDASE ASSEMBLY PROTEIN COX15 HOMOLOG"/>
    <property type="match status" value="1"/>
</dbReference>
<dbReference type="Pfam" id="PF02628">
    <property type="entry name" value="COX15-CtaA"/>
    <property type="match status" value="1"/>
</dbReference>
<proteinExistence type="inferred from homology"/>
<gene>
    <name evidence="1" type="primary">ctaA</name>
    <name type="synonym">cox15</name>
    <name type="ordered locus">RL1666</name>
</gene>
<sequence length="367" mass="41238">MAVANPTTEQAILSEMRKQNRDRRALRFWLGFVLLALFCLVLVGGATRLTNSGLSITEWKPIHGVIPPLSAAEWEEEFRLYQRIPEFQQLNSSMTVDEFKGIFWWEWAHRLIARAIGVIFALPLIYFWLTGRIEKRLRWPLVGILALGGLQGGIGWWMVSSGLSVRTDVSQYRLATHLVMACLIFAGCMWIMRGLSRHSDDPPPTRSSRGFAAAIAIFSLFQIYLGALVAGLDAGFSYNTWPLMDGAVIPSDLLIQQPFWINAFENPKTVQFIHRIGAYTLFALTLINMVIALRAAPWTTHARRAILLFVLVTLQAAIGIATLLMQVPLHWGLLHQAGALVVFGFAVANWRGFYGEYPHGTMIAERD</sequence>
<name>CTAA_RHIJ3</name>
<protein>
    <recommendedName>
        <fullName evidence="1">Heme A synthase</fullName>
        <shortName evidence="1">HAS</shortName>
        <ecNumber evidence="1">1.17.99.9</ecNumber>
    </recommendedName>
    <alternativeName>
        <fullName evidence="1">Cytochrome aa3-controlling protein</fullName>
    </alternativeName>
</protein>